<evidence type="ECO:0000255" key="1">
    <source>
        <dbReference type="HAMAP-Rule" id="MF_00126"/>
    </source>
</evidence>
<reference key="1">
    <citation type="submission" date="2008-05" db="EMBL/GenBank/DDBJ databases">
        <title>Complete sequence of Shigella boydii serotype 18 strain BS512.</title>
        <authorList>
            <person name="Rasko D.A."/>
            <person name="Rosovitz M."/>
            <person name="Maurelli A.T."/>
            <person name="Myers G."/>
            <person name="Seshadri R."/>
            <person name="Cer R."/>
            <person name="Jiang L."/>
            <person name="Ravel J."/>
            <person name="Sebastian Y."/>
        </authorList>
    </citation>
    <scope>NUCLEOTIDE SEQUENCE [LARGE SCALE GENOMIC DNA]</scope>
    <source>
        <strain>CDC 3083-94 / BS512</strain>
    </source>
</reference>
<protein>
    <recommendedName>
        <fullName evidence="1">Glutamine--tRNA ligase</fullName>
        <ecNumber evidence="1">6.1.1.18</ecNumber>
    </recommendedName>
    <alternativeName>
        <fullName evidence="1">Glutaminyl-tRNA synthetase</fullName>
        <shortName evidence="1">GlnRS</shortName>
    </alternativeName>
</protein>
<organism>
    <name type="scientific">Shigella boydii serotype 18 (strain CDC 3083-94 / BS512)</name>
    <dbReference type="NCBI Taxonomy" id="344609"/>
    <lineage>
        <taxon>Bacteria</taxon>
        <taxon>Pseudomonadati</taxon>
        <taxon>Pseudomonadota</taxon>
        <taxon>Gammaproteobacteria</taxon>
        <taxon>Enterobacterales</taxon>
        <taxon>Enterobacteriaceae</taxon>
        <taxon>Shigella</taxon>
    </lineage>
</organism>
<feature type="chain" id="PRO_1000095516" description="Glutamine--tRNA ligase">
    <location>
        <begin position="1"/>
        <end position="554"/>
    </location>
</feature>
<feature type="region of interest" description="Interaction with tRNA" evidence="1">
    <location>
        <begin position="317"/>
        <end position="324"/>
    </location>
</feature>
<feature type="short sequence motif" description="'HIGH' region" evidence="1">
    <location>
        <begin position="34"/>
        <end position="44"/>
    </location>
</feature>
<feature type="short sequence motif" description="'KMSKS' region" evidence="1">
    <location>
        <begin position="268"/>
        <end position="272"/>
    </location>
</feature>
<feature type="binding site" evidence="1">
    <location>
        <begin position="35"/>
        <end position="37"/>
    </location>
    <ligand>
        <name>ATP</name>
        <dbReference type="ChEBI" id="CHEBI:30616"/>
    </ligand>
</feature>
<feature type="binding site" evidence="1">
    <location>
        <begin position="41"/>
        <end position="47"/>
    </location>
    <ligand>
        <name>ATP</name>
        <dbReference type="ChEBI" id="CHEBI:30616"/>
    </ligand>
</feature>
<feature type="binding site" evidence="1">
    <location>
        <position position="67"/>
    </location>
    <ligand>
        <name>L-glutamine</name>
        <dbReference type="ChEBI" id="CHEBI:58359"/>
    </ligand>
</feature>
<feature type="binding site" evidence="1">
    <location>
        <position position="212"/>
    </location>
    <ligand>
        <name>L-glutamine</name>
        <dbReference type="ChEBI" id="CHEBI:58359"/>
    </ligand>
</feature>
<feature type="binding site" evidence="1">
    <location>
        <position position="231"/>
    </location>
    <ligand>
        <name>ATP</name>
        <dbReference type="ChEBI" id="CHEBI:30616"/>
    </ligand>
</feature>
<feature type="binding site" evidence="1">
    <location>
        <begin position="261"/>
        <end position="262"/>
    </location>
    <ligand>
        <name>ATP</name>
        <dbReference type="ChEBI" id="CHEBI:30616"/>
    </ligand>
</feature>
<feature type="binding site" evidence="1">
    <location>
        <begin position="269"/>
        <end position="271"/>
    </location>
    <ligand>
        <name>ATP</name>
        <dbReference type="ChEBI" id="CHEBI:30616"/>
    </ligand>
</feature>
<comment type="catalytic activity">
    <reaction evidence="1">
        <text>tRNA(Gln) + L-glutamine + ATP = L-glutaminyl-tRNA(Gln) + AMP + diphosphate</text>
        <dbReference type="Rhea" id="RHEA:20121"/>
        <dbReference type="Rhea" id="RHEA-COMP:9662"/>
        <dbReference type="Rhea" id="RHEA-COMP:9681"/>
        <dbReference type="ChEBI" id="CHEBI:30616"/>
        <dbReference type="ChEBI" id="CHEBI:33019"/>
        <dbReference type="ChEBI" id="CHEBI:58359"/>
        <dbReference type="ChEBI" id="CHEBI:78442"/>
        <dbReference type="ChEBI" id="CHEBI:78521"/>
        <dbReference type="ChEBI" id="CHEBI:456215"/>
        <dbReference type="EC" id="6.1.1.18"/>
    </reaction>
</comment>
<comment type="subunit">
    <text evidence="1">Monomer.</text>
</comment>
<comment type="subcellular location">
    <subcellularLocation>
        <location evidence="1">Cytoplasm</location>
    </subcellularLocation>
</comment>
<comment type="similarity">
    <text evidence="1">Belongs to the class-I aminoacyl-tRNA synthetase family.</text>
</comment>
<accession>B2TU51</accession>
<gene>
    <name evidence="1" type="primary">glnS</name>
    <name type="ordered locus">SbBS512_E0570</name>
</gene>
<proteinExistence type="inferred from homology"/>
<name>SYQ_SHIB3</name>
<sequence>MSEAEARPTNFIRQIIDEDLASGKHTTVHTRFPPEPNGYLHIGHAKSICLNFGIAQDYKGQCNLRFDDTNPVKEDIEYVESIKNDVEWLGFHWSGNVRYSSDYFDQLHAYAIELINKGLAYVDELTPEQIREYRGTLTQPGKNSPYRDRSVEENLALFEKMRAGGFEEGKACLRAKIDMASPFIVMRDPVLYRIKFAEHHQTGNKWCIYPMYDFTHCISDALEGITHSLCTLEFQDNRRLYDWVLDNITISVHPRQYEFSRLNLEYTVMSKRKLNLLVTDKHVEGWDDPRMPTISGLRRRGYTAASIREFCKRIGVTKQDNTIEMASLESCIREDLNENAPRAMAVIDPVKLVIENYQGEGEMVTMPNHPNKPEMGSRQVPFSGEIWIDRADFREEANKQYKRLVLGKEVRLRNAYVIKAERVEKDAEGNITTIFCTYDADTLSKDPADGRKVKGVIHWVSAAHALPVEIRLYDRLFSVPNPGAADDFLSVINPESLVIKQGFAEPSLKDAVAGKAFQFEREGYFCLDSRHSTAEKPVFNRTVGLRDTWAKVGE</sequence>
<keyword id="KW-0030">Aminoacyl-tRNA synthetase</keyword>
<keyword id="KW-0067">ATP-binding</keyword>
<keyword id="KW-0963">Cytoplasm</keyword>
<keyword id="KW-0436">Ligase</keyword>
<keyword id="KW-0547">Nucleotide-binding</keyword>
<keyword id="KW-0648">Protein biosynthesis</keyword>
<keyword id="KW-1185">Reference proteome</keyword>
<dbReference type="EC" id="6.1.1.18" evidence="1"/>
<dbReference type="EMBL" id="CP001063">
    <property type="protein sequence ID" value="ACD08693.1"/>
    <property type="molecule type" value="Genomic_DNA"/>
</dbReference>
<dbReference type="RefSeq" id="WP_001287159.1">
    <property type="nucleotide sequence ID" value="NC_010658.1"/>
</dbReference>
<dbReference type="SMR" id="B2TU51"/>
<dbReference type="STRING" id="344609.SbBS512_E0570"/>
<dbReference type="KEGG" id="sbc:SbBS512_E0570"/>
<dbReference type="HOGENOM" id="CLU_001882_2_3_6"/>
<dbReference type="Proteomes" id="UP000001030">
    <property type="component" value="Chromosome"/>
</dbReference>
<dbReference type="GO" id="GO:0005829">
    <property type="term" value="C:cytosol"/>
    <property type="evidence" value="ECO:0007669"/>
    <property type="project" value="TreeGrafter"/>
</dbReference>
<dbReference type="GO" id="GO:0005524">
    <property type="term" value="F:ATP binding"/>
    <property type="evidence" value="ECO:0007669"/>
    <property type="project" value="UniProtKB-UniRule"/>
</dbReference>
<dbReference type="GO" id="GO:0004819">
    <property type="term" value="F:glutamine-tRNA ligase activity"/>
    <property type="evidence" value="ECO:0007669"/>
    <property type="project" value="UniProtKB-UniRule"/>
</dbReference>
<dbReference type="GO" id="GO:0006425">
    <property type="term" value="P:glutaminyl-tRNA aminoacylation"/>
    <property type="evidence" value="ECO:0007669"/>
    <property type="project" value="InterPro"/>
</dbReference>
<dbReference type="GO" id="GO:0006424">
    <property type="term" value="P:glutamyl-tRNA aminoacylation"/>
    <property type="evidence" value="ECO:0007669"/>
    <property type="project" value="UniProtKB-UniRule"/>
</dbReference>
<dbReference type="CDD" id="cd00807">
    <property type="entry name" value="GlnRS_core"/>
    <property type="match status" value="1"/>
</dbReference>
<dbReference type="FunFam" id="1.10.1160.10:FF:000001">
    <property type="entry name" value="Glutamine--tRNA ligase"/>
    <property type="match status" value="1"/>
</dbReference>
<dbReference type="FunFam" id="2.40.240.10:FF:000001">
    <property type="entry name" value="Glutamine--tRNA ligase"/>
    <property type="match status" value="1"/>
</dbReference>
<dbReference type="FunFam" id="2.40.240.10:FF:000003">
    <property type="entry name" value="Glutamine--tRNA ligase"/>
    <property type="match status" value="1"/>
</dbReference>
<dbReference type="FunFam" id="3.90.800.10:FF:000001">
    <property type="entry name" value="Glutamine--tRNA ligase"/>
    <property type="match status" value="1"/>
</dbReference>
<dbReference type="FunFam" id="3.40.50.620:FF:000037">
    <property type="entry name" value="Glutamine--tRNA ligase cytoplasmic"/>
    <property type="match status" value="1"/>
</dbReference>
<dbReference type="Gene3D" id="1.10.1160.10">
    <property type="entry name" value="Glutamyl-trna Synthetase, Domain 2"/>
    <property type="match status" value="1"/>
</dbReference>
<dbReference type="Gene3D" id="3.90.800.10">
    <property type="entry name" value="Glutamyl-tRNA Synthetase, Domain 3"/>
    <property type="match status" value="1"/>
</dbReference>
<dbReference type="Gene3D" id="3.40.50.620">
    <property type="entry name" value="HUPs"/>
    <property type="match status" value="1"/>
</dbReference>
<dbReference type="Gene3D" id="2.40.240.10">
    <property type="entry name" value="Ribosomal Protein L25, Chain P"/>
    <property type="match status" value="2"/>
</dbReference>
<dbReference type="HAMAP" id="MF_00126">
    <property type="entry name" value="Gln_tRNA_synth"/>
    <property type="match status" value="1"/>
</dbReference>
<dbReference type="InterPro" id="IPR001412">
    <property type="entry name" value="aa-tRNA-synth_I_CS"/>
</dbReference>
<dbReference type="InterPro" id="IPR004514">
    <property type="entry name" value="Gln-tRNA-synth"/>
</dbReference>
<dbReference type="InterPro" id="IPR050132">
    <property type="entry name" value="Gln/Glu-tRNA_Ligase"/>
</dbReference>
<dbReference type="InterPro" id="IPR022861">
    <property type="entry name" value="Gln_tRNA_ligase_bac"/>
</dbReference>
<dbReference type="InterPro" id="IPR000924">
    <property type="entry name" value="Glu/Gln-tRNA-synth"/>
</dbReference>
<dbReference type="InterPro" id="IPR020058">
    <property type="entry name" value="Glu/Gln-tRNA-synth_Ib_cat-dom"/>
</dbReference>
<dbReference type="InterPro" id="IPR020059">
    <property type="entry name" value="Glu/Gln-tRNA-synth_Ib_codon-bd"/>
</dbReference>
<dbReference type="InterPro" id="IPR020061">
    <property type="entry name" value="Glu_tRNA_lig_a-bdl"/>
</dbReference>
<dbReference type="InterPro" id="IPR020056">
    <property type="entry name" value="Rbsml_bL25/Gln-tRNA_synth_N"/>
</dbReference>
<dbReference type="InterPro" id="IPR011035">
    <property type="entry name" value="Ribosomal_bL25/Gln-tRNA_synth"/>
</dbReference>
<dbReference type="InterPro" id="IPR014729">
    <property type="entry name" value="Rossmann-like_a/b/a_fold"/>
</dbReference>
<dbReference type="InterPro" id="IPR049437">
    <property type="entry name" value="tRNA-synt_1c_C2"/>
</dbReference>
<dbReference type="NCBIfam" id="TIGR00440">
    <property type="entry name" value="glnS"/>
    <property type="match status" value="1"/>
</dbReference>
<dbReference type="NCBIfam" id="NF011291">
    <property type="entry name" value="PRK14703.1"/>
    <property type="match status" value="1"/>
</dbReference>
<dbReference type="PANTHER" id="PTHR43097:SF5">
    <property type="entry name" value="GLUTAMATE--TRNA LIGASE"/>
    <property type="match status" value="1"/>
</dbReference>
<dbReference type="PANTHER" id="PTHR43097">
    <property type="entry name" value="GLUTAMINE-TRNA LIGASE"/>
    <property type="match status" value="1"/>
</dbReference>
<dbReference type="Pfam" id="PF00749">
    <property type="entry name" value="tRNA-synt_1c"/>
    <property type="match status" value="1"/>
</dbReference>
<dbReference type="Pfam" id="PF03950">
    <property type="entry name" value="tRNA-synt_1c_C"/>
    <property type="match status" value="1"/>
</dbReference>
<dbReference type="Pfam" id="PF20974">
    <property type="entry name" value="tRNA-synt_1c_C2"/>
    <property type="match status" value="1"/>
</dbReference>
<dbReference type="PRINTS" id="PR00987">
    <property type="entry name" value="TRNASYNTHGLU"/>
</dbReference>
<dbReference type="SUPFAM" id="SSF52374">
    <property type="entry name" value="Nucleotidylyl transferase"/>
    <property type="match status" value="1"/>
</dbReference>
<dbReference type="SUPFAM" id="SSF50715">
    <property type="entry name" value="Ribosomal protein L25-like"/>
    <property type="match status" value="1"/>
</dbReference>
<dbReference type="PROSITE" id="PS00178">
    <property type="entry name" value="AA_TRNA_LIGASE_I"/>
    <property type="match status" value="1"/>
</dbReference>